<reference key="1">
    <citation type="submission" date="2007-10" db="EMBL/GenBank/DDBJ databases">
        <title>Genome sequence of Campylobacter concisus 13826 isolated from human feces.</title>
        <authorList>
            <person name="Fouts D.E."/>
            <person name="Mongodin E.F."/>
            <person name="Puiu D."/>
            <person name="Sebastian Y."/>
            <person name="Miller W.G."/>
            <person name="Mandrell R.E."/>
            <person name="On S."/>
            <person name="Nelson K.E."/>
        </authorList>
    </citation>
    <scope>NUCLEOTIDE SEQUENCE [LARGE SCALE GENOMIC DNA]</scope>
    <source>
        <strain>13826</strain>
    </source>
</reference>
<organism>
    <name type="scientific">Campylobacter concisus (strain 13826)</name>
    <dbReference type="NCBI Taxonomy" id="360104"/>
    <lineage>
        <taxon>Bacteria</taxon>
        <taxon>Pseudomonadati</taxon>
        <taxon>Campylobacterota</taxon>
        <taxon>Epsilonproteobacteria</taxon>
        <taxon>Campylobacterales</taxon>
        <taxon>Campylobacteraceae</taxon>
        <taxon>Campylobacter</taxon>
    </lineage>
</organism>
<gene>
    <name evidence="1" type="primary">ung</name>
    <name type="ordered locus">Ccon26_00300</name>
    <name type="ORF">CCC13826_1822</name>
</gene>
<name>UNG_CAMC1</name>
<keyword id="KW-0963">Cytoplasm</keyword>
<keyword id="KW-0227">DNA damage</keyword>
<keyword id="KW-0234">DNA repair</keyword>
<keyword id="KW-0378">Hydrolase</keyword>
<accession>A7ZAZ4</accession>
<proteinExistence type="inferred from homology"/>
<dbReference type="EC" id="3.2.2.27" evidence="1"/>
<dbReference type="EMBL" id="CP000792">
    <property type="protein sequence ID" value="EAT99078.1"/>
    <property type="molecule type" value="Genomic_DNA"/>
</dbReference>
<dbReference type="RefSeq" id="WP_012000982.1">
    <property type="nucleotide sequence ID" value="NC_009802.2"/>
</dbReference>
<dbReference type="SMR" id="A7ZAZ4"/>
<dbReference type="STRING" id="360104.CCC13826_1822"/>
<dbReference type="KEGG" id="cco:CCC13826_1822"/>
<dbReference type="eggNOG" id="COG0692">
    <property type="taxonomic scope" value="Bacteria"/>
</dbReference>
<dbReference type="HOGENOM" id="CLU_032162_3_0_7"/>
<dbReference type="OrthoDB" id="9804372at2"/>
<dbReference type="Proteomes" id="UP000001121">
    <property type="component" value="Chromosome"/>
</dbReference>
<dbReference type="GO" id="GO:0005737">
    <property type="term" value="C:cytoplasm"/>
    <property type="evidence" value="ECO:0007669"/>
    <property type="project" value="UniProtKB-SubCell"/>
</dbReference>
<dbReference type="GO" id="GO:0004844">
    <property type="term" value="F:uracil DNA N-glycosylase activity"/>
    <property type="evidence" value="ECO:0007669"/>
    <property type="project" value="UniProtKB-UniRule"/>
</dbReference>
<dbReference type="GO" id="GO:0097510">
    <property type="term" value="P:base-excision repair, AP site formation via deaminated base removal"/>
    <property type="evidence" value="ECO:0007669"/>
    <property type="project" value="TreeGrafter"/>
</dbReference>
<dbReference type="CDD" id="cd10027">
    <property type="entry name" value="UDG-F1-like"/>
    <property type="match status" value="1"/>
</dbReference>
<dbReference type="FunFam" id="3.40.470.10:FF:000001">
    <property type="entry name" value="Uracil-DNA glycosylase"/>
    <property type="match status" value="1"/>
</dbReference>
<dbReference type="Gene3D" id="3.40.470.10">
    <property type="entry name" value="Uracil-DNA glycosylase-like domain"/>
    <property type="match status" value="1"/>
</dbReference>
<dbReference type="HAMAP" id="MF_00148">
    <property type="entry name" value="UDG"/>
    <property type="match status" value="1"/>
</dbReference>
<dbReference type="InterPro" id="IPR002043">
    <property type="entry name" value="UDG_fam1"/>
</dbReference>
<dbReference type="InterPro" id="IPR018085">
    <property type="entry name" value="Ura-DNA_Glyclase_AS"/>
</dbReference>
<dbReference type="InterPro" id="IPR005122">
    <property type="entry name" value="Uracil-DNA_glycosylase-like"/>
</dbReference>
<dbReference type="InterPro" id="IPR036895">
    <property type="entry name" value="Uracil-DNA_glycosylase-like_sf"/>
</dbReference>
<dbReference type="NCBIfam" id="NF003588">
    <property type="entry name" value="PRK05254.1-1"/>
    <property type="match status" value="1"/>
</dbReference>
<dbReference type="NCBIfam" id="NF003589">
    <property type="entry name" value="PRK05254.1-2"/>
    <property type="match status" value="1"/>
</dbReference>
<dbReference type="NCBIfam" id="NF003591">
    <property type="entry name" value="PRK05254.1-4"/>
    <property type="match status" value="1"/>
</dbReference>
<dbReference type="NCBIfam" id="NF003592">
    <property type="entry name" value="PRK05254.1-5"/>
    <property type="match status" value="1"/>
</dbReference>
<dbReference type="NCBIfam" id="TIGR00628">
    <property type="entry name" value="ung"/>
    <property type="match status" value="1"/>
</dbReference>
<dbReference type="PANTHER" id="PTHR11264">
    <property type="entry name" value="URACIL-DNA GLYCOSYLASE"/>
    <property type="match status" value="1"/>
</dbReference>
<dbReference type="PANTHER" id="PTHR11264:SF0">
    <property type="entry name" value="URACIL-DNA GLYCOSYLASE"/>
    <property type="match status" value="1"/>
</dbReference>
<dbReference type="Pfam" id="PF03167">
    <property type="entry name" value="UDG"/>
    <property type="match status" value="1"/>
</dbReference>
<dbReference type="SMART" id="SM00986">
    <property type="entry name" value="UDG"/>
    <property type="match status" value="1"/>
</dbReference>
<dbReference type="SMART" id="SM00987">
    <property type="entry name" value="UreE_C"/>
    <property type="match status" value="1"/>
</dbReference>
<dbReference type="SUPFAM" id="SSF52141">
    <property type="entry name" value="Uracil-DNA glycosylase-like"/>
    <property type="match status" value="1"/>
</dbReference>
<dbReference type="PROSITE" id="PS00130">
    <property type="entry name" value="U_DNA_GLYCOSYLASE"/>
    <property type="match status" value="1"/>
</dbReference>
<evidence type="ECO:0000255" key="1">
    <source>
        <dbReference type="HAMAP-Rule" id="MF_00148"/>
    </source>
</evidence>
<comment type="function">
    <text evidence="1">Excises uracil residues from the DNA which can arise as a result of misincorporation of dUMP residues by DNA polymerase or due to deamination of cytosine.</text>
</comment>
<comment type="catalytic activity">
    <reaction evidence="1">
        <text>Hydrolyzes single-stranded DNA or mismatched double-stranded DNA and polynucleotides, releasing free uracil.</text>
        <dbReference type="EC" id="3.2.2.27"/>
    </reaction>
</comment>
<comment type="subcellular location">
    <subcellularLocation>
        <location evidence="1">Cytoplasm</location>
    </subcellularLocation>
</comment>
<comment type="similarity">
    <text evidence="1">Belongs to the uracil-DNA glycosylase (UDG) superfamily. UNG family.</text>
</comment>
<feature type="chain" id="PRO_1000009871" description="Uracil-DNA glycosylase">
    <location>
        <begin position="1"/>
        <end position="230"/>
    </location>
</feature>
<feature type="active site" description="Proton acceptor" evidence="1">
    <location>
        <position position="70"/>
    </location>
</feature>
<sequence length="230" mass="25240">MQINLNDVKIEPSWKEVLKDEFLSENFARIKENFLKAKSAGVVYPPSGLIFNAFNLTPFHDVKVVILGQDPYHGANQAMGLSFSVPSGVRVPPSLVNIYKEIYADLGIKEPNSGDLTKWAKQGVLLLNSTLSVSAGAANSHASFGWQGFTDAVIRKISENLQNVVFMLWGNPAKAKAPLIDASKHLILEAAHPSPLARGAFFGCRHFSKANIYLAKHGKTPIEWDLNTKI</sequence>
<protein>
    <recommendedName>
        <fullName evidence="1">Uracil-DNA glycosylase</fullName>
        <shortName evidence="1">UDG</shortName>
        <ecNumber evidence="1">3.2.2.27</ecNumber>
    </recommendedName>
</protein>